<protein>
    <recommendedName>
        <fullName evidence="1">Tryptophan 2,3-dioxygenase</fullName>
        <shortName evidence="1">TDO</shortName>
        <ecNumber evidence="1">1.13.11.11</ecNumber>
    </recommendedName>
    <alternativeName>
        <fullName evidence="1">Tryptamin 2,3-dioxygenase</fullName>
    </alternativeName>
    <alternativeName>
        <fullName evidence="1">Tryptophan oxygenase</fullName>
        <shortName evidence="1">TO</shortName>
        <shortName evidence="1">TRPO</shortName>
    </alternativeName>
    <alternativeName>
        <fullName evidence="1">Tryptophan pyrrolase</fullName>
    </alternativeName>
    <alternativeName>
        <fullName evidence="1">Tryptophanase</fullName>
    </alternativeName>
</protein>
<gene>
    <name evidence="1" type="primary">kynA</name>
    <name type="ordered locus">BceJ2315_27300</name>
    <name type="ORF">BCAL2792</name>
</gene>
<keyword id="KW-0223">Dioxygenase</keyword>
<keyword id="KW-0349">Heme</keyword>
<keyword id="KW-0408">Iron</keyword>
<keyword id="KW-0479">Metal-binding</keyword>
<keyword id="KW-0560">Oxidoreductase</keyword>
<keyword id="KW-0823">Tryptophan catabolism</keyword>
<dbReference type="EC" id="1.13.11.11" evidence="1"/>
<dbReference type="EMBL" id="AM747720">
    <property type="protein sequence ID" value="CAR53092.1"/>
    <property type="status" value="ALT_INIT"/>
    <property type="molecule type" value="Genomic_DNA"/>
</dbReference>
<dbReference type="RefSeq" id="WP_006482479.1">
    <property type="nucleotide sequence ID" value="NC_011000.1"/>
</dbReference>
<dbReference type="SMR" id="B4E9J1"/>
<dbReference type="KEGG" id="bcj:BCAL2792"/>
<dbReference type="eggNOG" id="COG3483">
    <property type="taxonomic scope" value="Bacteria"/>
</dbReference>
<dbReference type="HOGENOM" id="CLU_063240_0_0_4"/>
<dbReference type="BioCyc" id="BCEN216591:G1G1V-3093-MONOMER"/>
<dbReference type="UniPathway" id="UPA00333">
    <property type="reaction ID" value="UER00453"/>
</dbReference>
<dbReference type="Proteomes" id="UP000001035">
    <property type="component" value="Chromosome 1"/>
</dbReference>
<dbReference type="GO" id="GO:0020037">
    <property type="term" value="F:heme binding"/>
    <property type="evidence" value="ECO:0000250"/>
    <property type="project" value="UniProtKB"/>
</dbReference>
<dbReference type="GO" id="GO:0046872">
    <property type="term" value="F:metal ion binding"/>
    <property type="evidence" value="ECO:0007669"/>
    <property type="project" value="UniProtKB-KW"/>
</dbReference>
<dbReference type="GO" id="GO:0004833">
    <property type="term" value="F:tryptophan 2,3-dioxygenase activity"/>
    <property type="evidence" value="ECO:0000250"/>
    <property type="project" value="UniProtKB"/>
</dbReference>
<dbReference type="GO" id="GO:0019442">
    <property type="term" value="P:L-tryptophan catabolic process to acetyl-CoA"/>
    <property type="evidence" value="ECO:0007669"/>
    <property type="project" value="TreeGrafter"/>
</dbReference>
<dbReference type="GO" id="GO:0019441">
    <property type="term" value="P:L-tryptophan catabolic process to kynurenine"/>
    <property type="evidence" value="ECO:0000250"/>
    <property type="project" value="UniProtKB"/>
</dbReference>
<dbReference type="FunFam" id="1.20.58.480:FF:000001">
    <property type="entry name" value="Tryptophan 2,3-dioxygenase"/>
    <property type="match status" value="1"/>
</dbReference>
<dbReference type="Gene3D" id="1.20.58.480">
    <property type="match status" value="1"/>
</dbReference>
<dbReference type="HAMAP" id="MF_01972">
    <property type="entry name" value="T23O"/>
    <property type="match status" value="1"/>
</dbReference>
<dbReference type="InterPro" id="IPR037217">
    <property type="entry name" value="Trp/Indoleamine_2_3_dOase-like"/>
</dbReference>
<dbReference type="InterPro" id="IPR017485">
    <property type="entry name" value="Trp_2-3-dOase_bac"/>
</dbReference>
<dbReference type="InterPro" id="IPR004981">
    <property type="entry name" value="Trp_2_3_dOase"/>
</dbReference>
<dbReference type="NCBIfam" id="TIGR03036">
    <property type="entry name" value="trp_2_3_diox"/>
    <property type="match status" value="1"/>
</dbReference>
<dbReference type="PANTHER" id="PTHR10138">
    <property type="entry name" value="TRYPTOPHAN 2,3-DIOXYGENASE"/>
    <property type="match status" value="1"/>
</dbReference>
<dbReference type="PANTHER" id="PTHR10138:SF0">
    <property type="entry name" value="TRYPTOPHAN 2,3-DIOXYGENASE"/>
    <property type="match status" value="1"/>
</dbReference>
<dbReference type="Pfam" id="PF03301">
    <property type="entry name" value="Trp_dioxygenase"/>
    <property type="match status" value="1"/>
</dbReference>
<dbReference type="SUPFAM" id="SSF140959">
    <property type="entry name" value="Indolic compounds 2,3-dioxygenase-like"/>
    <property type="match status" value="1"/>
</dbReference>
<comment type="function">
    <text evidence="1">Heme-dependent dioxygenase that catalyzes the oxidative cleavage of the L-tryptophan (L-Trp) pyrrole ring and converts L-tryptophan to N-formyl-L-kynurenine. Catalyzes the oxidative cleavage of the indole moiety.</text>
</comment>
<comment type="catalytic activity">
    <reaction evidence="1">
        <text>L-tryptophan + O2 = N-formyl-L-kynurenine</text>
        <dbReference type="Rhea" id="RHEA:24536"/>
        <dbReference type="ChEBI" id="CHEBI:15379"/>
        <dbReference type="ChEBI" id="CHEBI:57912"/>
        <dbReference type="ChEBI" id="CHEBI:58629"/>
        <dbReference type="EC" id="1.13.11.11"/>
    </reaction>
</comment>
<comment type="cofactor">
    <cofactor evidence="1">
        <name>heme</name>
        <dbReference type="ChEBI" id="CHEBI:30413"/>
    </cofactor>
    <text evidence="1">Binds 1 heme group per subunit.</text>
</comment>
<comment type="pathway">
    <text evidence="1">Amino-acid degradation; L-tryptophan degradation via kynurenine pathway; L-kynurenine from L-tryptophan: step 1/2.</text>
</comment>
<comment type="subunit">
    <text evidence="1">Homotetramer.</text>
</comment>
<comment type="similarity">
    <text evidence="1">Belongs to the tryptophan 2,3-dioxygenase family.</text>
</comment>
<comment type="sequence caution" evidence="3">
    <conflict type="erroneous initiation">
        <sequence resource="EMBL-CDS" id="CAR53092"/>
    </conflict>
</comment>
<proteinExistence type="inferred from homology"/>
<organism>
    <name type="scientific">Burkholderia cenocepacia (strain ATCC BAA-245 / DSM 16553 / LMG 16656 / NCTC 13227 / J2315 / CF5610)</name>
    <name type="common">Burkholderia cepacia (strain J2315)</name>
    <dbReference type="NCBI Taxonomy" id="216591"/>
    <lineage>
        <taxon>Bacteria</taxon>
        <taxon>Pseudomonadati</taxon>
        <taxon>Pseudomonadota</taxon>
        <taxon>Betaproteobacteria</taxon>
        <taxon>Burkholderiales</taxon>
        <taxon>Burkholderiaceae</taxon>
        <taxon>Burkholderia</taxon>
        <taxon>Burkholderia cepacia complex</taxon>
    </lineage>
</organism>
<sequence>MQPPGGDAPAGCPFSGARAAQPAQAAHEAPHVPGEADAQAGWHNAQLDFSKSMSYGDYLSLNSILDAQHPLSPDHNEMLFIIQHQTSELWMKLALFELRGALDAVRTDALPPAFKMLARVSRILEQLVQAWNVLSTMTPSEYSAMRPYLGQSSGFQSYQYRQLEFLLGNKNAQMLQPHAHRPDILEQVRATLEAPSFYDEVVRLLARRGFPIAPERLERDWTQPMRHDETVEAAWLEVYRHPQQHWELYEMAEELVDLEDAFRQWRFRHVTTVERIIGFKQGTGGTSGAPYLRKMLDVVLFPELWHVRTTL</sequence>
<feature type="chain" id="PRO_0000360100" description="Tryptophan 2,3-dioxygenase">
    <location>
        <begin position="1"/>
        <end position="311"/>
    </location>
</feature>
<feature type="region of interest" description="Disordered" evidence="2">
    <location>
        <begin position="1"/>
        <end position="37"/>
    </location>
</feature>
<feature type="compositionally biased region" description="Low complexity" evidence="2">
    <location>
        <begin position="17"/>
        <end position="27"/>
    </location>
</feature>
<feature type="binding site" evidence="1">
    <location>
        <begin position="80"/>
        <end position="84"/>
    </location>
    <ligand>
        <name>substrate</name>
    </ligand>
</feature>
<feature type="binding site" evidence="1">
    <location>
        <position position="142"/>
    </location>
    <ligand>
        <name>substrate</name>
    </ligand>
</feature>
<feature type="binding site" evidence="1">
    <location>
        <position position="146"/>
    </location>
    <ligand>
        <name>substrate</name>
    </ligand>
</feature>
<feature type="binding site" description="axial binding residue" evidence="1">
    <location>
        <position position="269"/>
    </location>
    <ligand>
        <name>heme</name>
        <dbReference type="ChEBI" id="CHEBI:30413"/>
    </ligand>
    <ligandPart>
        <name>Fe</name>
        <dbReference type="ChEBI" id="CHEBI:18248"/>
    </ligandPart>
</feature>
<feature type="binding site" evidence="1">
    <location>
        <position position="283"/>
    </location>
    <ligand>
        <name>substrate</name>
    </ligand>
</feature>
<accession>B4E9J1</accession>
<evidence type="ECO:0000255" key="1">
    <source>
        <dbReference type="HAMAP-Rule" id="MF_01972"/>
    </source>
</evidence>
<evidence type="ECO:0000256" key="2">
    <source>
        <dbReference type="SAM" id="MobiDB-lite"/>
    </source>
</evidence>
<evidence type="ECO:0000305" key="3"/>
<name>T23O_BURCJ</name>
<reference key="1">
    <citation type="journal article" date="2009" name="J. Bacteriol.">
        <title>The genome of Burkholderia cenocepacia J2315, an epidemic pathogen of cystic fibrosis patients.</title>
        <authorList>
            <person name="Holden M.T."/>
            <person name="Seth-Smith H.M."/>
            <person name="Crossman L.C."/>
            <person name="Sebaihia M."/>
            <person name="Bentley S.D."/>
            <person name="Cerdeno-Tarraga A.M."/>
            <person name="Thomson N.R."/>
            <person name="Bason N."/>
            <person name="Quail M.A."/>
            <person name="Sharp S."/>
            <person name="Cherevach I."/>
            <person name="Churcher C."/>
            <person name="Goodhead I."/>
            <person name="Hauser H."/>
            <person name="Holroyd N."/>
            <person name="Mungall K."/>
            <person name="Scott P."/>
            <person name="Walker D."/>
            <person name="White B."/>
            <person name="Rose H."/>
            <person name="Iversen P."/>
            <person name="Mil-Homens D."/>
            <person name="Rocha E.P."/>
            <person name="Fialho A.M."/>
            <person name="Baldwin A."/>
            <person name="Dowson C."/>
            <person name="Barrell B.G."/>
            <person name="Govan J.R."/>
            <person name="Vandamme P."/>
            <person name="Hart C.A."/>
            <person name="Mahenthiralingam E."/>
            <person name="Parkhill J."/>
        </authorList>
    </citation>
    <scope>NUCLEOTIDE SEQUENCE [LARGE SCALE GENOMIC DNA]</scope>
    <source>
        <strain>ATCC BAA-245 / DSM 16553 / LMG 16656 / NCTC 13227 / J2315 / CF5610</strain>
    </source>
</reference>